<evidence type="ECO:0000250" key="1">
    <source>
        <dbReference type="UniProtKB" id="P50389"/>
    </source>
</evidence>
<evidence type="ECO:0000255" key="2">
    <source>
        <dbReference type="HAMAP-Rule" id="MF_01627"/>
    </source>
</evidence>
<feature type="chain" id="PRO_0000063150" description="Purine nucleoside phosphorylase DeoD-type">
    <location>
        <begin position="1"/>
        <end position="238"/>
    </location>
</feature>
<feature type="active site" description="Proton donor" evidence="2">
    <location>
        <position position="204"/>
    </location>
</feature>
<feature type="binding site" evidence="1">
    <location>
        <position position="4"/>
    </location>
    <ligand>
        <name>a purine D-ribonucleoside</name>
        <dbReference type="ChEBI" id="CHEBI:142355"/>
        <note>ligand shared between dimeric partners</note>
    </ligand>
</feature>
<feature type="binding site" description="in other chain" evidence="1">
    <location>
        <position position="20"/>
    </location>
    <ligand>
        <name>phosphate</name>
        <dbReference type="ChEBI" id="CHEBI:43474"/>
        <note>ligand shared between dimeric partners</note>
    </ligand>
</feature>
<feature type="binding site" description="in other chain" evidence="1">
    <location>
        <position position="24"/>
    </location>
    <ligand>
        <name>phosphate</name>
        <dbReference type="ChEBI" id="CHEBI:43474"/>
        <note>ligand shared between dimeric partners</note>
    </ligand>
</feature>
<feature type="binding site" evidence="1">
    <location>
        <position position="43"/>
    </location>
    <ligand>
        <name>phosphate</name>
        <dbReference type="ChEBI" id="CHEBI:43474"/>
        <note>ligand shared between dimeric partners</note>
    </ligand>
</feature>
<feature type="binding site" description="in other chain" evidence="1">
    <location>
        <begin position="87"/>
        <end position="90"/>
    </location>
    <ligand>
        <name>phosphate</name>
        <dbReference type="ChEBI" id="CHEBI:43474"/>
        <note>ligand shared between dimeric partners</note>
    </ligand>
</feature>
<feature type="binding site" description="in other chain" evidence="1">
    <location>
        <begin position="179"/>
        <end position="181"/>
    </location>
    <ligand>
        <name>a purine D-ribonucleoside</name>
        <dbReference type="ChEBI" id="CHEBI:142355"/>
        <note>ligand shared between dimeric partners</note>
    </ligand>
</feature>
<feature type="binding site" description="in other chain" evidence="1">
    <location>
        <begin position="203"/>
        <end position="204"/>
    </location>
    <ligand>
        <name>a purine D-ribonucleoside</name>
        <dbReference type="ChEBI" id="CHEBI:142355"/>
        <note>ligand shared between dimeric partners</note>
    </ligand>
</feature>
<feature type="site" description="Important for catalytic activity" evidence="2">
    <location>
        <position position="217"/>
    </location>
</feature>
<accession>Q9CLE6</accession>
<reference key="1">
    <citation type="journal article" date="2001" name="Proc. Natl. Acad. Sci. U.S.A.">
        <title>Complete genomic sequence of Pasteurella multocida Pm70.</title>
        <authorList>
            <person name="May B.J."/>
            <person name="Zhang Q."/>
            <person name="Li L.L."/>
            <person name="Paustian M.L."/>
            <person name="Whittam T.S."/>
            <person name="Kapur V."/>
        </authorList>
    </citation>
    <scope>NUCLEOTIDE SEQUENCE [LARGE SCALE GENOMIC DNA]</scope>
    <source>
        <strain>Pm70</strain>
    </source>
</reference>
<protein>
    <recommendedName>
        <fullName evidence="2">Purine nucleoside phosphorylase DeoD-type</fullName>
        <shortName evidence="2">PNP</shortName>
        <ecNumber evidence="2">2.4.2.1</ecNumber>
    </recommendedName>
</protein>
<name>DEOD_PASMU</name>
<organism>
    <name type="scientific">Pasteurella multocida (strain Pm70)</name>
    <dbReference type="NCBI Taxonomy" id="272843"/>
    <lineage>
        <taxon>Bacteria</taxon>
        <taxon>Pseudomonadati</taxon>
        <taxon>Pseudomonadota</taxon>
        <taxon>Gammaproteobacteria</taxon>
        <taxon>Pasteurellales</taxon>
        <taxon>Pasteurellaceae</taxon>
        <taxon>Pasteurella</taxon>
    </lineage>
</organism>
<sequence>MTPHINAPAGAFADVVLMPGDPLRAKYIAETFLQDVKEITNVRNMLGFTGTYKGRKISVMGHGMGIPSCSIYTKELITEYGVKKIIRVGSCGAVRMDVKLRDVVIGFGACTDSKVNRIRFKNHDFAAIADFDMTMAAVQAAKAKGLNVHVGNLFSADLFYTPDVEMFDVMEKYGILGVEMEAAGIYGVAAEFGAKALTICTVSDHIRTHEQTTPEERQLTFNDMIEIALESVLIGDNA</sequence>
<comment type="function">
    <text evidence="2">Catalyzes the reversible phosphorolytic breakdown of the N-glycosidic bond in the beta-(deoxy)ribonucleoside molecules, with the formation of the corresponding free purine bases and pentose-1-phosphate.</text>
</comment>
<comment type="catalytic activity">
    <reaction evidence="2">
        <text>a purine D-ribonucleoside + phosphate = a purine nucleobase + alpha-D-ribose 1-phosphate</text>
        <dbReference type="Rhea" id="RHEA:19805"/>
        <dbReference type="ChEBI" id="CHEBI:26386"/>
        <dbReference type="ChEBI" id="CHEBI:43474"/>
        <dbReference type="ChEBI" id="CHEBI:57720"/>
        <dbReference type="ChEBI" id="CHEBI:142355"/>
        <dbReference type="EC" id="2.4.2.1"/>
    </reaction>
</comment>
<comment type="catalytic activity">
    <reaction evidence="2">
        <text>a purine 2'-deoxy-D-ribonucleoside + phosphate = a purine nucleobase + 2-deoxy-alpha-D-ribose 1-phosphate</text>
        <dbReference type="Rhea" id="RHEA:36431"/>
        <dbReference type="ChEBI" id="CHEBI:26386"/>
        <dbReference type="ChEBI" id="CHEBI:43474"/>
        <dbReference type="ChEBI" id="CHEBI:57259"/>
        <dbReference type="ChEBI" id="CHEBI:142361"/>
        <dbReference type="EC" id="2.4.2.1"/>
    </reaction>
</comment>
<comment type="subunit">
    <text evidence="2">Homohexamer; trimer of homodimers.</text>
</comment>
<comment type="similarity">
    <text evidence="2">Belongs to the PNP/UDP phosphorylase family.</text>
</comment>
<keyword id="KW-0328">Glycosyltransferase</keyword>
<keyword id="KW-1185">Reference proteome</keyword>
<keyword id="KW-0808">Transferase</keyword>
<proteinExistence type="inferred from homology"/>
<dbReference type="EC" id="2.4.2.1" evidence="2"/>
<dbReference type="EMBL" id="AE004439">
    <property type="protein sequence ID" value="AAK03375.1"/>
    <property type="molecule type" value="Genomic_DNA"/>
</dbReference>
<dbReference type="RefSeq" id="WP_005751943.1">
    <property type="nucleotide sequence ID" value="NC_002663.1"/>
</dbReference>
<dbReference type="SMR" id="Q9CLE6"/>
<dbReference type="STRING" id="272843.PM1291"/>
<dbReference type="EnsemblBacteria" id="AAK03375">
    <property type="protein sequence ID" value="AAK03375"/>
    <property type="gene ID" value="PM1291"/>
</dbReference>
<dbReference type="GeneID" id="77206755"/>
<dbReference type="KEGG" id="pmu:PM1291"/>
<dbReference type="HOGENOM" id="CLU_068457_2_0_6"/>
<dbReference type="OrthoDB" id="9782889at2"/>
<dbReference type="Proteomes" id="UP000000809">
    <property type="component" value="Chromosome"/>
</dbReference>
<dbReference type="GO" id="GO:0005829">
    <property type="term" value="C:cytosol"/>
    <property type="evidence" value="ECO:0007669"/>
    <property type="project" value="TreeGrafter"/>
</dbReference>
<dbReference type="GO" id="GO:0004731">
    <property type="term" value="F:purine-nucleoside phosphorylase activity"/>
    <property type="evidence" value="ECO:0007669"/>
    <property type="project" value="UniProtKB-UniRule"/>
</dbReference>
<dbReference type="GO" id="GO:0006152">
    <property type="term" value="P:purine nucleoside catabolic process"/>
    <property type="evidence" value="ECO:0007669"/>
    <property type="project" value="TreeGrafter"/>
</dbReference>
<dbReference type="CDD" id="cd09006">
    <property type="entry name" value="PNP_EcPNPI-like"/>
    <property type="match status" value="1"/>
</dbReference>
<dbReference type="FunFam" id="3.40.50.1580:FF:000002">
    <property type="entry name" value="Purine nucleoside phosphorylase DeoD-type"/>
    <property type="match status" value="1"/>
</dbReference>
<dbReference type="Gene3D" id="3.40.50.1580">
    <property type="entry name" value="Nucleoside phosphorylase domain"/>
    <property type="match status" value="1"/>
</dbReference>
<dbReference type="HAMAP" id="MF_01627">
    <property type="entry name" value="Pur_nucleosid_phosp"/>
    <property type="match status" value="1"/>
</dbReference>
<dbReference type="InterPro" id="IPR004402">
    <property type="entry name" value="DeoD-type"/>
</dbReference>
<dbReference type="InterPro" id="IPR018016">
    <property type="entry name" value="Nucleoside_phosphorylase_CS"/>
</dbReference>
<dbReference type="InterPro" id="IPR000845">
    <property type="entry name" value="Nucleoside_phosphorylase_d"/>
</dbReference>
<dbReference type="InterPro" id="IPR035994">
    <property type="entry name" value="Nucleoside_phosphorylase_sf"/>
</dbReference>
<dbReference type="NCBIfam" id="TIGR00107">
    <property type="entry name" value="deoD"/>
    <property type="match status" value="1"/>
</dbReference>
<dbReference type="NCBIfam" id="NF004489">
    <property type="entry name" value="PRK05819.1"/>
    <property type="match status" value="1"/>
</dbReference>
<dbReference type="NCBIfam" id="NF009914">
    <property type="entry name" value="PRK13374.1"/>
    <property type="match status" value="1"/>
</dbReference>
<dbReference type="PANTHER" id="PTHR43691:SF2">
    <property type="entry name" value="PURINE NUCLEOSIDE PHOSPHORYLASE DEOD-TYPE"/>
    <property type="match status" value="1"/>
</dbReference>
<dbReference type="PANTHER" id="PTHR43691">
    <property type="entry name" value="URIDINE PHOSPHORYLASE"/>
    <property type="match status" value="1"/>
</dbReference>
<dbReference type="Pfam" id="PF01048">
    <property type="entry name" value="PNP_UDP_1"/>
    <property type="match status" value="1"/>
</dbReference>
<dbReference type="SUPFAM" id="SSF53167">
    <property type="entry name" value="Purine and uridine phosphorylases"/>
    <property type="match status" value="1"/>
</dbReference>
<dbReference type="PROSITE" id="PS01232">
    <property type="entry name" value="PNP_UDP_1"/>
    <property type="match status" value="1"/>
</dbReference>
<gene>
    <name evidence="2" type="primary">deoD</name>
    <name type="ordered locus">PM1291</name>
</gene>